<gene>
    <name evidence="1" type="primary">clsA</name>
    <name type="synonym">cls</name>
    <name type="ordered locus">KPK_2120</name>
</gene>
<proteinExistence type="inferred from homology"/>
<comment type="function">
    <text evidence="1">Catalyzes the reversible phosphatidyl group transfer from one phosphatidylglycerol molecule to another to form cardiolipin (CL) (diphosphatidylglycerol) and glycerol.</text>
</comment>
<comment type="catalytic activity">
    <reaction evidence="1">
        <text>2 a 1,2-diacyl-sn-glycero-3-phospho-(1'-sn-glycerol) = a cardiolipin + glycerol</text>
        <dbReference type="Rhea" id="RHEA:31451"/>
        <dbReference type="ChEBI" id="CHEBI:17754"/>
        <dbReference type="ChEBI" id="CHEBI:62237"/>
        <dbReference type="ChEBI" id="CHEBI:64716"/>
    </reaction>
</comment>
<comment type="subcellular location">
    <subcellularLocation>
        <location evidence="1">Cell inner membrane</location>
        <topology evidence="1">Multi-pass membrane protein</topology>
    </subcellularLocation>
</comment>
<comment type="similarity">
    <text evidence="1">Belongs to the phospholipase D family. Cardiolipin synthase subfamily. ClsA sub-subfamily.</text>
</comment>
<keyword id="KW-0997">Cell inner membrane</keyword>
<keyword id="KW-1003">Cell membrane</keyword>
<keyword id="KW-0444">Lipid biosynthesis</keyword>
<keyword id="KW-0443">Lipid metabolism</keyword>
<keyword id="KW-0472">Membrane</keyword>
<keyword id="KW-0594">Phospholipid biosynthesis</keyword>
<keyword id="KW-1208">Phospholipid metabolism</keyword>
<keyword id="KW-0677">Repeat</keyword>
<keyword id="KW-0808">Transferase</keyword>
<keyword id="KW-0812">Transmembrane</keyword>
<keyword id="KW-1133">Transmembrane helix</keyword>
<feature type="chain" id="PRO_1000098908" description="Cardiolipin synthase A">
    <location>
        <begin position="1"/>
        <end position="486"/>
    </location>
</feature>
<feature type="transmembrane region" description="Helical" evidence="1">
    <location>
        <begin position="3"/>
        <end position="23"/>
    </location>
</feature>
<feature type="transmembrane region" description="Helical" evidence="1">
    <location>
        <begin position="38"/>
        <end position="58"/>
    </location>
</feature>
<feature type="domain" description="PLD phosphodiesterase 1" evidence="1">
    <location>
        <begin position="219"/>
        <end position="246"/>
    </location>
</feature>
<feature type="domain" description="PLD phosphodiesterase 2" evidence="1">
    <location>
        <begin position="399"/>
        <end position="426"/>
    </location>
</feature>
<feature type="active site" evidence="1">
    <location>
        <position position="224"/>
    </location>
</feature>
<feature type="active site" evidence="1">
    <location>
        <position position="226"/>
    </location>
</feature>
<feature type="active site" evidence="1">
    <location>
        <position position="231"/>
    </location>
</feature>
<feature type="active site" evidence="1">
    <location>
        <position position="404"/>
    </location>
</feature>
<feature type="active site" evidence="1">
    <location>
        <position position="406"/>
    </location>
</feature>
<feature type="active site" evidence="1">
    <location>
        <position position="411"/>
    </location>
</feature>
<organism>
    <name type="scientific">Klebsiella pneumoniae (strain 342)</name>
    <dbReference type="NCBI Taxonomy" id="507522"/>
    <lineage>
        <taxon>Bacteria</taxon>
        <taxon>Pseudomonadati</taxon>
        <taxon>Pseudomonadota</taxon>
        <taxon>Gammaproteobacteria</taxon>
        <taxon>Enterobacterales</taxon>
        <taxon>Enterobacteriaceae</taxon>
        <taxon>Klebsiella/Raoultella group</taxon>
        <taxon>Klebsiella</taxon>
        <taxon>Klebsiella pneumoniae complex</taxon>
    </lineage>
</organism>
<evidence type="ECO:0000255" key="1">
    <source>
        <dbReference type="HAMAP-Rule" id="MF_00190"/>
    </source>
</evidence>
<reference key="1">
    <citation type="journal article" date="2008" name="PLoS Genet.">
        <title>Complete genome sequence of the N2-fixing broad host range endophyte Klebsiella pneumoniae 342 and virulence predictions verified in mice.</title>
        <authorList>
            <person name="Fouts D.E."/>
            <person name="Tyler H.L."/>
            <person name="DeBoy R.T."/>
            <person name="Daugherty S."/>
            <person name="Ren Q."/>
            <person name="Badger J.H."/>
            <person name="Durkin A.S."/>
            <person name="Huot H."/>
            <person name="Shrivastava S."/>
            <person name="Kothari S."/>
            <person name="Dodson R.J."/>
            <person name="Mohamoud Y."/>
            <person name="Khouri H."/>
            <person name="Roesch L.F.W."/>
            <person name="Krogfelt K.A."/>
            <person name="Struve C."/>
            <person name="Triplett E.W."/>
            <person name="Methe B.A."/>
        </authorList>
    </citation>
    <scope>NUCLEOTIDE SEQUENCE [LARGE SCALE GENOMIC DNA]</scope>
    <source>
        <strain>342</strain>
    </source>
</reference>
<dbReference type="EC" id="2.7.8.-" evidence="1"/>
<dbReference type="EMBL" id="CP000964">
    <property type="protein sequence ID" value="ACI07826.1"/>
    <property type="molecule type" value="Genomic_DNA"/>
</dbReference>
<dbReference type="SMR" id="B5XQA9"/>
<dbReference type="KEGG" id="kpe:KPK_2120"/>
<dbReference type="HOGENOM" id="CLU_038053_1_0_6"/>
<dbReference type="Proteomes" id="UP000001734">
    <property type="component" value="Chromosome"/>
</dbReference>
<dbReference type="GO" id="GO:0005886">
    <property type="term" value="C:plasma membrane"/>
    <property type="evidence" value="ECO:0007669"/>
    <property type="project" value="UniProtKB-SubCell"/>
</dbReference>
<dbReference type="GO" id="GO:0008808">
    <property type="term" value="F:cardiolipin synthase activity"/>
    <property type="evidence" value="ECO:0007669"/>
    <property type="project" value="InterPro"/>
</dbReference>
<dbReference type="GO" id="GO:0032049">
    <property type="term" value="P:cardiolipin biosynthetic process"/>
    <property type="evidence" value="ECO:0007669"/>
    <property type="project" value="InterPro"/>
</dbReference>
<dbReference type="CDD" id="cd09152">
    <property type="entry name" value="PLDc_EcCLS_like_1"/>
    <property type="match status" value="1"/>
</dbReference>
<dbReference type="CDD" id="cd09158">
    <property type="entry name" value="PLDc_EcCLS_like_2"/>
    <property type="match status" value="1"/>
</dbReference>
<dbReference type="FunFam" id="3.30.870.10:FF:000002">
    <property type="entry name" value="Cardiolipin synthase A"/>
    <property type="match status" value="1"/>
</dbReference>
<dbReference type="FunFam" id="3.30.870.10:FF:000003">
    <property type="entry name" value="Cardiolipin synthase A"/>
    <property type="match status" value="1"/>
</dbReference>
<dbReference type="Gene3D" id="3.30.870.10">
    <property type="entry name" value="Endonuclease Chain A"/>
    <property type="match status" value="2"/>
</dbReference>
<dbReference type="HAMAP" id="MF_00190">
    <property type="entry name" value="Cardiolipin_synth_ClsA"/>
    <property type="match status" value="1"/>
</dbReference>
<dbReference type="InterPro" id="IPR022924">
    <property type="entry name" value="Cardiolipin_synthase"/>
</dbReference>
<dbReference type="InterPro" id="IPR030840">
    <property type="entry name" value="CL_synthase_A"/>
</dbReference>
<dbReference type="InterPro" id="IPR027379">
    <property type="entry name" value="CLS_N"/>
</dbReference>
<dbReference type="InterPro" id="IPR025202">
    <property type="entry name" value="PLD-like_dom"/>
</dbReference>
<dbReference type="InterPro" id="IPR001736">
    <property type="entry name" value="PLipase_D/transphosphatidylase"/>
</dbReference>
<dbReference type="NCBIfam" id="TIGR04265">
    <property type="entry name" value="bac_cardiolipin"/>
    <property type="match status" value="1"/>
</dbReference>
<dbReference type="PANTHER" id="PTHR21248">
    <property type="entry name" value="CARDIOLIPIN SYNTHASE"/>
    <property type="match status" value="1"/>
</dbReference>
<dbReference type="PANTHER" id="PTHR21248:SF22">
    <property type="entry name" value="PHOSPHOLIPASE D"/>
    <property type="match status" value="1"/>
</dbReference>
<dbReference type="Pfam" id="PF13091">
    <property type="entry name" value="PLDc_2"/>
    <property type="match status" value="2"/>
</dbReference>
<dbReference type="Pfam" id="PF13396">
    <property type="entry name" value="PLDc_N"/>
    <property type="match status" value="1"/>
</dbReference>
<dbReference type="SMART" id="SM00155">
    <property type="entry name" value="PLDc"/>
    <property type="match status" value="2"/>
</dbReference>
<dbReference type="SUPFAM" id="SSF56024">
    <property type="entry name" value="Phospholipase D/nuclease"/>
    <property type="match status" value="2"/>
</dbReference>
<dbReference type="PROSITE" id="PS50035">
    <property type="entry name" value="PLD"/>
    <property type="match status" value="2"/>
</dbReference>
<protein>
    <recommendedName>
        <fullName evidence="1">Cardiolipin synthase A</fullName>
        <shortName evidence="1">CL synthase</shortName>
        <ecNumber evidence="1">2.7.8.-</ecNumber>
    </recommendedName>
</protein>
<sequence>MTTFYTVVNWLVILGYWLLIAGVTLRILMKRRAVPSAMAWLLIIYILPLVGIIAYLSFGELHLGKRRAERARAMWPSTAKWLNDLKACKHIFAEDNSPVAESLFKLCERRQGIGGVKGNQLQLLTESDDVMQALIRDIQLARHNIEMVFYIWQPGGMADSVAESLMAAARRGVHCRLMLDSAGSVAFFRSPWAAMMRNAGIEVVEALKVNLMRVFLRRMDLRQHRKMVMIDNYIAYTGSMNMVDPRYFKQDSGVGQWIDLMARMEGPVATSMGIVYSCDWEIETGKRILPPPPDVNIMPFEEASGHTIHTIASGPGFPEDLIHQALLTAAYAAKEHLIMTTPYFVPSDDLLHAICTAAQRGVDVSIILPRKNDSLLVGWASRAFFTELLAAGVKIYQFEGGLLHTKSVLVDGELSLVGTVNLDMRSLWLNFEITLVIDDAGFGSDLAAVQDDYISRSRLLDARRWLKRPLWQRIVERLFYFFSPLL</sequence>
<name>CLSA_KLEP3</name>
<accession>B5XQA9</accession>